<organism>
    <name type="scientific">Exiguobacterium sp. (strain ATCC BAA-1283 / AT1b)</name>
    <dbReference type="NCBI Taxonomy" id="360911"/>
    <lineage>
        <taxon>Bacteria</taxon>
        <taxon>Bacillati</taxon>
        <taxon>Bacillota</taxon>
        <taxon>Bacilli</taxon>
        <taxon>Bacillales</taxon>
        <taxon>Bacillales Family XII. Incertae Sedis</taxon>
        <taxon>Exiguobacterium</taxon>
    </lineage>
</organism>
<keyword id="KW-0687">Ribonucleoprotein</keyword>
<keyword id="KW-0689">Ribosomal protein</keyword>
<keyword id="KW-0694">RNA-binding</keyword>
<keyword id="KW-0699">rRNA-binding</keyword>
<sequence length="89" mass="10506">MALSKERKNEIIAEYATKQGDTGSPEVQVAVLTEQINTLNDHLRTHKKDHHSRRGLLKMVGRRRNLLTYLRNKDVTRYRELIQRLGLRR</sequence>
<name>RS15_EXISA</name>
<accession>C4L6J5</accession>
<comment type="function">
    <text evidence="1">One of the primary rRNA binding proteins, it binds directly to 16S rRNA where it helps nucleate assembly of the platform of the 30S subunit by binding and bridging several RNA helices of the 16S rRNA.</text>
</comment>
<comment type="function">
    <text evidence="1">Forms an intersubunit bridge (bridge B4) with the 23S rRNA of the 50S subunit in the ribosome.</text>
</comment>
<comment type="subunit">
    <text evidence="1">Part of the 30S ribosomal subunit. Forms a bridge to the 50S subunit in the 70S ribosome, contacting the 23S rRNA.</text>
</comment>
<comment type="similarity">
    <text evidence="1">Belongs to the universal ribosomal protein uS15 family.</text>
</comment>
<dbReference type="EMBL" id="CP001615">
    <property type="protein sequence ID" value="ACQ71874.1"/>
    <property type="molecule type" value="Genomic_DNA"/>
</dbReference>
<dbReference type="RefSeq" id="WP_015881433.1">
    <property type="nucleotide sequence ID" value="NC_012673.1"/>
</dbReference>
<dbReference type="SMR" id="C4L6J5"/>
<dbReference type="STRING" id="360911.EAT1b_2960"/>
<dbReference type="GeneID" id="94372376"/>
<dbReference type="KEGG" id="eat:EAT1b_2960"/>
<dbReference type="eggNOG" id="COG0184">
    <property type="taxonomic scope" value="Bacteria"/>
</dbReference>
<dbReference type="HOGENOM" id="CLU_148518_0_0_9"/>
<dbReference type="OrthoDB" id="9799262at2"/>
<dbReference type="Proteomes" id="UP000000716">
    <property type="component" value="Chromosome"/>
</dbReference>
<dbReference type="GO" id="GO:0022627">
    <property type="term" value="C:cytosolic small ribosomal subunit"/>
    <property type="evidence" value="ECO:0007669"/>
    <property type="project" value="TreeGrafter"/>
</dbReference>
<dbReference type="GO" id="GO:0019843">
    <property type="term" value="F:rRNA binding"/>
    <property type="evidence" value="ECO:0007669"/>
    <property type="project" value="UniProtKB-UniRule"/>
</dbReference>
<dbReference type="GO" id="GO:0003735">
    <property type="term" value="F:structural constituent of ribosome"/>
    <property type="evidence" value="ECO:0007669"/>
    <property type="project" value="InterPro"/>
</dbReference>
<dbReference type="GO" id="GO:0006412">
    <property type="term" value="P:translation"/>
    <property type="evidence" value="ECO:0007669"/>
    <property type="project" value="UniProtKB-UniRule"/>
</dbReference>
<dbReference type="CDD" id="cd00353">
    <property type="entry name" value="Ribosomal_S15p_S13e"/>
    <property type="match status" value="1"/>
</dbReference>
<dbReference type="FunFam" id="1.10.287.10:FF:000002">
    <property type="entry name" value="30S ribosomal protein S15"/>
    <property type="match status" value="1"/>
</dbReference>
<dbReference type="Gene3D" id="6.10.250.3130">
    <property type="match status" value="1"/>
</dbReference>
<dbReference type="Gene3D" id="1.10.287.10">
    <property type="entry name" value="S15/NS1, RNA-binding"/>
    <property type="match status" value="1"/>
</dbReference>
<dbReference type="HAMAP" id="MF_01343_B">
    <property type="entry name" value="Ribosomal_uS15_B"/>
    <property type="match status" value="1"/>
</dbReference>
<dbReference type="InterPro" id="IPR000589">
    <property type="entry name" value="Ribosomal_uS15"/>
</dbReference>
<dbReference type="InterPro" id="IPR005290">
    <property type="entry name" value="Ribosomal_uS15_bac-type"/>
</dbReference>
<dbReference type="InterPro" id="IPR009068">
    <property type="entry name" value="uS15_NS1_RNA-bd_sf"/>
</dbReference>
<dbReference type="NCBIfam" id="TIGR00952">
    <property type="entry name" value="S15_bact"/>
    <property type="match status" value="1"/>
</dbReference>
<dbReference type="PANTHER" id="PTHR23321">
    <property type="entry name" value="RIBOSOMAL PROTEIN S15, BACTERIAL AND ORGANELLAR"/>
    <property type="match status" value="1"/>
</dbReference>
<dbReference type="PANTHER" id="PTHR23321:SF26">
    <property type="entry name" value="SMALL RIBOSOMAL SUBUNIT PROTEIN US15M"/>
    <property type="match status" value="1"/>
</dbReference>
<dbReference type="Pfam" id="PF00312">
    <property type="entry name" value="Ribosomal_S15"/>
    <property type="match status" value="1"/>
</dbReference>
<dbReference type="SMART" id="SM01387">
    <property type="entry name" value="Ribosomal_S15"/>
    <property type="match status" value="1"/>
</dbReference>
<dbReference type="SUPFAM" id="SSF47060">
    <property type="entry name" value="S15/NS1 RNA-binding domain"/>
    <property type="match status" value="1"/>
</dbReference>
<dbReference type="PROSITE" id="PS00362">
    <property type="entry name" value="RIBOSOMAL_S15"/>
    <property type="match status" value="1"/>
</dbReference>
<proteinExistence type="inferred from homology"/>
<feature type="chain" id="PRO_1000214757" description="Small ribosomal subunit protein uS15">
    <location>
        <begin position="1"/>
        <end position="89"/>
    </location>
</feature>
<gene>
    <name evidence="1" type="primary">rpsO</name>
    <name type="ordered locus">EAT1b_2960</name>
</gene>
<evidence type="ECO:0000255" key="1">
    <source>
        <dbReference type="HAMAP-Rule" id="MF_01343"/>
    </source>
</evidence>
<evidence type="ECO:0000305" key="2"/>
<protein>
    <recommendedName>
        <fullName evidence="1">Small ribosomal subunit protein uS15</fullName>
    </recommendedName>
    <alternativeName>
        <fullName evidence="2">30S ribosomal protein S15</fullName>
    </alternativeName>
</protein>
<reference key="1">
    <citation type="journal article" date="2011" name="J. Bacteriol.">
        <title>Complete genome sequence of the Thermophilic Bacterium Exiguobacterium sp. AT1b.</title>
        <authorList>
            <person name="Vishnivetskaya T.A."/>
            <person name="Lucas S."/>
            <person name="Copeland A."/>
            <person name="Lapidus A."/>
            <person name="Glavina del Rio T."/>
            <person name="Dalin E."/>
            <person name="Tice H."/>
            <person name="Bruce D.C."/>
            <person name="Goodwin L.A."/>
            <person name="Pitluck S."/>
            <person name="Saunders E."/>
            <person name="Brettin T."/>
            <person name="Detter C."/>
            <person name="Han C."/>
            <person name="Larimer F."/>
            <person name="Land M.L."/>
            <person name="Hauser L.J."/>
            <person name="Kyrpides N.C."/>
            <person name="Ovchinnikova G."/>
            <person name="Kathariou S."/>
            <person name="Ramaley R.F."/>
            <person name="Rodrigues D.F."/>
            <person name="Hendrix C."/>
            <person name="Richardson P."/>
            <person name="Tiedje J.M."/>
        </authorList>
    </citation>
    <scope>NUCLEOTIDE SEQUENCE [LARGE SCALE GENOMIC DNA]</scope>
    <source>
        <strain>ATCC BAA-1283 / AT1b</strain>
    </source>
</reference>